<dbReference type="EMBL" id="X16093">
    <property type="protein sequence ID" value="CAA34219.1"/>
    <property type="molecule type" value="Genomic_DNA"/>
</dbReference>
<dbReference type="PIR" id="S04989">
    <property type="entry name" value="VDBPHK"/>
</dbReference>
<dbReference type="SMR" id="P18682"/>
<dbReference type="InterPro" id="IPR010444">
    <property type="entry name" value="Phage_lambda_Kil"/>
</dbReference>
<dbReference type="Pfam" id="PF06301">
    <property type="entry name" value="Lambda_Kil"/>
    <property type="match status" value="1"/>
</dbReference>
<accession>P18682</accession>
<organismHost>
    <name type="scientific">Escherichia coli</name>
    <dbReference type="NCBI Taxonomy" id="562"/>
</organismHost>
<gene>
    <name type="primary">kil</name>
</gene>
<sequence>MRNEIAINHQMLRAAQNKAVIARFIGDSKMWLEANKAMKSAINLPWYRRK</sequence>
<protein>
    <recommendedName>
        <fullName>Protein kil</fullName>
    </recommendedName>
</protein>
<comment type="function">
    <text>Gene kil kills the host upon prophage induction.</text>
</comment>
<name>VKIL_BPHK0</name>
<organism>
    <name type="scientific">Escherichia phage HK022</name>
    <name type="common">Bacteriophage HK022</name>
    <dbReference type="NCBI Taxonomy" id="10742"/>
    <lineage>
        <taxon>Viruses</taxon>
        <taxon>Duplodnaviria</taxon>
        <taxon>Heunggongvirae</taxon>
        <taxon>Uroviricota</taxon>
        <taxon>Caudoviricetes</taxon>
        <taxon>Hendrixvirinae</taxon>
        <taxon>Shamshuipovirus</taxon>
    </lineage>
</organism>
<feature type="chain" id="PRO_0000077650" description="Protein kil">
    <location>
        <begin position="1"/>
        <end position="50"/>
    </location>
</feature>
<reference key="1">
    <citation type="journal article" date="1989" name="J. Mol. Biol.">
        <title>Structure and function of the nun gene and the immunity region of the lambdoid phage HK022.</title>
        <authorList>
            <person name="Oberto J."/>
            <person name="Weisberg R.A."/>
            <person name="Gottesman M.E."/>
        </authorList>
    </citation>
    <scope>NUCLEOTIDE SEQUENCE [GENOMIC DNA]</scope>
</reference>
<proteinExistence type="predicted"/>